<name>PYM1_XENTR</name>
<protein>
    <recommendedName>
        <fullName evidence="2">Partner of Y14 and mago</fullName>
    </recommendedName>
    <alternativeName>
        <fullName evidence="3">PYM homolog 1 exon junction complex-associated factor</fullName>
    </alternativeName>
    <alternativeName>
        <fullName>Protein wibg homolog</fullName>
    </alternativeName>
</protein>
<proteinExistence type="evidence at transcript level"/>
<accession>B1WB17</accession>
<accession>B7ZSP7</accession>
<keyword id="KW-0175">Coiled coil</keyword>
<keyword id="KW-0963">Cytoplasm</keyword>
<keyword id="KW-0866">Nonsense-mediated mRNA decay</keyword>
<keyword id="KW-0539">Nucleus</keyword>
<keyword id="KW-1185">Reference proteome</keyword>
<keyword id="KW-0810">Translation regulation</keyword>
<dbReference type="EMBL" id="BC161580">
    <property type="protein sequence ID" value="AAI61580.1"/>
    <property type="molecule type" value="mRNA"/>
</dbReference>
<dbReference type="EMBL" id="BC170597">
    <property type="protein sequence ID" value="AAI70597.1"/>
    <property type="molecule type" value="mRNA"/>
</dbReference>
<dbReference type="EMBL" id="BC170601">
    <property type="protein sequence ID" value="AAI70601.1"/>
    <property type="molecule type" value="mRNA"/>
</dbReference>
<dbReference type="RefSeq" id="NP_001016274.1">
    <property type="nucleotide sequence ID" value="NM_001016274.2"/>
</dbReference>
<dbReference type="SMR" id="B1WB17"/>
<dbReference type="FunCoup" id="B1WB17">
    <property type="interactions" value="2235"/>
</dbReference>
<dbReference type="STRING" id="8364.ENSXETP00000053834"/>
<dbReference type="PaxDb" id="8364-ENSXETP00000047260"/>
<dbReference type="GeneID" id="549028"/>
<dbReference type="KEGG" id="xtr:549028"/>
<dbReference type="AGR" id="Xenbase:XB-GENE-943122"/>
<dbReference type="CTD" id="84305"/>
<dbReference type="Xenbase" id="XB-GENE-943122">
    <property type="gene designation" value="pym1"/>
</dbReference>
<dbReference type="eggNOG" id="KOG4325">
    <property type="taxonomic scope" value="Eukaryota"/>
</dbReference>
<dbReference type="HOGENOM" id="CLU_074603_3_0_1"/>
<dbReference type="InParanoid" id="B1WB17"/>
<dbReference type="OrthoDB" id="21625at2759"/>
<dbReference type="TreeFam" id="TF324615"/>
<dbReference type="Proteomes" id="UP000008143">
    <property type="component" value="Chromosome 2"/>
</dbReference>
<dbReference type="GO" id="GO:0005737">
    <property type="term" value="C:cytoplasm"/>
    <property type="evidence" value="ECO:0007669"/>
    <property type="project" value="UniProtKB-SubCell"/>
</dbReference>
<dbReference type="GO" id="GO:0035145">
    <property type="term" value="C:exon-exon junction complex"/>
    <property type="evidence" value="ECO:0000250"/>
    <property type="project" value="UniProtKB"/>
</dbReference>
<dbReference type="GO" id="GO:0005730">
    <property type="term" value="C:nucleolus"/>
    <property type="evidence" value="ECO:0007669"/>
    <property type="project" value="UniProtKB-SubCell"/>
</dbReference>
<dbReference type="GO" id="GO:0005654">
    <property type="term" value="C:nucleoplasm"/>
    <property type="evidence" value="ECO:0007669"/>
    <property type="project" value="UniProtKB-SubCell"/>
</dbReference>
<dbReference type="GO" id="GO:0043022">
    <property type="term" value="F:ribosome binding"/>
    <property type="evidence" value="ECO:0000250"/>
    <property type="project" value="UniProtKB"/>
</dbReference>
<dbReference type="GO" id="GO:1903259">
    <property type="term" value="P:exon-exon junction complex disassembly"/>
    <property type="evidence" value="ECO:0007669"/>
    <property type="project" value="InterPro"/>
</dbReference>
<dbReference type="GO" id="GO:0000184">
    <property type="term" value="P:nuclear-transcribed mRNA catabolic process, nonsense-mediated decay"/>
    <property type="evidence" value="ECO:0000250"/>
    <property type="project" value="UniProtKB"/>
</dbReference>
<dbReference type="GO" id="GO:0045727">
    <property type="term" value="P:positive regulation of translation"/>
    <property type="evidence" value="ECO:0000250"/>
    <property type="project" value="UniProtKB"/>
</dbReference>
<dbReference type="InterPro" id="IPR039333">
    <property type="entry name" value="PYM1"/>
</dbReference>
<dbReference type="InterPro" id="IPR015362">
    <property type="entry name" value="WIBG_mago-bd"/>
</dbReference>
<dbReference type="InterPro" id="IPR036348">
    <property type="entry name" value="WIBG_N_sf"/>
</dbReference>
<dbReference type="PANTHER" id="PTHR22959:SF0">
    <property type="entry name" value="PARTNER OF Y14 AND MAGO"/>
    <property type="match status" value="1"/>
</dbReference>
<dbReference type="PANTHER" id="PTHR22959">
    <property type="entry name" value="PYM PROTEIN"/>
    <property type="match status" value="1"/>
</dbReference>
<dbReference type="Pfam" id="PF09282">
    <property type="entry name" value="Mago-bind"/>
    <property type="match status" value="1"/>
</dbReference>
<dbReference type="SMART" id="SM01273">
    <property type="entry name" value="Mago-bind"/>
    <property type="match status" value="1"/>
</dbReference>
<dbReference type="SUPFAM" id="SSF101931">
    <property type="entry name" value="Pym (Within the bgcn gene intron protein, WIBG), N-terminal domain"/>
    <property type="match status" value="1"/>
</dbReference>
<reference key="1">
    <citation type="submission" date="2008-04" db="EMBL/GenBank/DDBJ databases">
        <authorList>
            <consortium name="NIH - Xenopus Gene Collection (XGC) project"/>
        </authorList>
    </citation>
    <scope>NUCLEOTIDE SEQUENCE [LARGE SCALE MRNA]</scope>
    <source>
        <tissue>Embryo</tissue>
        <tissue>Neurula</tissue>
    </source>
</reference>
<comment type="function">
    <text evidence="1">Key regulator of the exon junction complex (EJC), a multiprotein complex that associates immediately upstream of the exon-exon junction on mRNAs and serves as a positional landmark for the intron exon structure of genes and directs post-transcriptional processes in the cytoplasm such as mRNA export, nonsense-mediated mRNA decay (NMD) or translation. Acts as an EJC disassembly factor, allowing translation-dependent EJC removal and recycling by disrupting mature EJC from spliced mRNAs. Its association with the 40S ribosomal subunit probably prevents a translation-independent disassembly of the EJC from spliced mRNAs, by restricting its activity to mRNAs that have been translated. Interferes with NMD and enhances translation of spliced mRNAs, probably by antagonizing EJC functions (By similarity).</text>
</comment>
<comment type="subunit">
    <text evidence="1">Interacts (via N-terminus) with magoh and rbm8a; the interaction is direct. Associates (eIF2A-like region) with the 40S ribosomal subunit and the 48S preinitiation complex (By similarity).</text>
</comment>
<comment type="subcellular location">
    <subcellularLocation>
        <location evidence="3">Cytoplasm</location>
    </subcellularLocation>
    <subcellularLocation>
        <location evidence="3">Nucleus</location>
        <location evidence="3">Nucleolus</location>
    </subcellularLocation>
    <subcellularLocation>
        <location evidence="3">Nucleus</location>
        <location evidence="3">Nucleoplasm</location>
    </subcellularLocation>
    <text evidence="3">Shuttles between the nucleus and the cytoplasm. Nuclear export is mediated by XPO1/CRM1.</text>
</comment>
<comment type="similarity">
    <text evidence="6">Belongs to the pym family.</text>
</comment>
<organism>
    <name type="scientific">Xenopus tropicalis</name>
    <name type="common">Western clawed frog</name>
    <name type="synonym">Silurana tropicalis</name>
    <dbReference type="NCBI Taxonomy" id="8364"/>
    <lineage>
        <taxon>Eukaryota</taxon>
        <taxon>Metazoa</taxon>
        <taxon>Chordata</taxon>
        <taxon>Craniata</taxon>
        <taxon>Vertebrata</taxon>
        <taxon>Euteleostomi</taxon>
        <taxon>Amphibia</taxon>
        <taxon>Batrachia</taxon>
        <taxon>Anura</taxon>
        <taxon>Pipoidea</taxon>
        <taxon>Pipidae</taxon>
        <taxon>Xenopodinae</taxon>
        <taxon>Xenopus</taxon>
        <taxon>Silurana</taxon>
    </lineage>
</organism>
<gene>
    <name evidence="3" type="primary">pym1</name>
    <name type="synonym">pym</name>
    <name type="synonym">wibg</name>
</gene>
<sequence length="200" mass="22854">MATPYVTDESGKYIAATQRPDGSWRKQRKVKEGYVPQEEVPVYENKYVKFFKSKPSLPPGLSETDASTGKTQQPSKPDADTTLSKTAKRNMKRKEKRKQEKGEREQVEDARQDLERVNISETPVQKNLTSAHKNGSASSDNPAAEKAKKIKNLRKKLRQVEELQQKIDSGEIKEPSKEQLEKLSRRKALEEEIEDLELDL</sequence>
<evidence type="ECO:0000250" key="1"/>
<evidence type="ECO:0000250" key="2">
    <source>
        <dbReference type="UniProtKB" id="P82804"/>
    </source>
</evidence>
<evidence type="ECO:0000250" key="3">
    <source>
        <dbReference type="UniProtKB" id="Q9BRP8"/>
    </source>
</evidence>
<evidence type="ECO:0000255" key="4"/>
<evidence type="ECO:0000256" key="5">
    <source>
        <dbReference type="SAM" id="MobiDB-lite"/>
    </source>
</evidence>
<evidence type="ECO:0000305" key="6"/>
<feature type="chain" id="PRO_0000378158" description="Partner of Y14 and mago">
    <location>
        <begin position="1"/>
        <end position="200"/>
    </location>
</feature>
<feature type="region of interest" description="Disordered" evidence="5">
    <location>
        <begin position="1"/>
        <end position="30"/>
    </location>
</feature>
<feature type="region of interest" description="Disordered" evidence="5">
    <location>
        <begin position="52"/>
        <end position="147"/>
    </location>
</feature>
<feature type="coiled-coil region" evidence="4">
    <location>
        <begin position="84"/>
        <end position="200"/>
    </location>
</feature>
<feature type="compositionally biased region" description="Polar residues" evidence="5">
    <location>
        <begin position="64"/>
        <end position="85"/>
    </location>
</feature>
<feature type="compositionally biased region" description="Basic residues" evidence="5">
    <location>
        <begin position="86"/>
        <end position="96"/>
    </location>
</feature>
<feature type="compositionally biased region" description="Basic and acidic residues" evidence="5">
    <location>
        <begin position="97"/>
        <end position="118"/>
    </location>
</feature>
<feature type="compositionally biased region" description="Polar residues" evidence="5">
    <location>
        <begin position="119"/>
        <end position="141"/>
    </location>
</feature>
<feature type="sequence conflict" description="In Ref. 1; AAI70601/AAI70597." evidence="6" ref="1">
    <original>K</original>
    <variation>R</variation>
    <location>
        <position position="146"/>
    </location>
</feature>